<protein>
    <recommendedName>
        <fullName evidence="1">6,7-dimethyl-8-ribityllumazine synthase</fullName>
        <shortName evidence="1">DMRL synthase</shortName>
        <shortName evidence="1">LS</shortName>
        <shortName evidence="1">Lumazine synthase</shortName>
        <ecNumber evidence="1">2.5.1.78</ecNumber>
    </recommendedName>
</protein>
<reference key="1">
    <citation type="journal article" date="2007" name="J. Bacteriol.">
        <title>Complete genome sequence of Haemophilus somnus (Histophilus somni) strain 129Pt and comparison to Haemophilus ducreyi 35000HP and Haemophilus influenzae Rd.</title>
        <authorList>
            <person name="Challacombe J.F."/>
            <person name="Duncan A.J."/>
            <person name="Brettin T.S."/>
            <person name="Bruce D."/>
            <person name="Chertkov O."/>
            <person name="Detter J.C."/>
            <person name="Han C.S."/>
            <person name="Misra M."/>
            <person name="Richardson P."/>
            <person name="Tapia R."/>
            <person name="Thayer N."/>
            <person name="Xie G."/>
            <person name="Inzana T.J."/>
        </authorList>
    </citation>
    <scope>NUCLEOTIDE SEQUENCE [LARGE SCALE GENOMIC DNA]</scope>
    <source>
        <strain>129Pt</strain>
    </source>
</reference>
<feature type="chain" id="PRO_1000040430" description="6,7-dimethyl-8-ribityllumazine synthase">
    <location>
        <begin position="1"/>
        <end position="157"/>
    </location>
</feature>
<feature type="active site" description="Proton donor" evidence="1">
    <location>
        <position position="89"/>
    </location>
</feature>
<feature type="binding site" evidence="1">
    <location>
        <position position="22"/>
    </location>
    <ligand>
        <name>5-amino-6-(D-ribitylamino)uracil</name>
        <dbReference type="ChEBI" id="CHEBI:15934"/>
    </ligand>
</feature>
<feature type="binding site" evidence="1">
    <location>
        <begin position="57"/>
        <end position="59"/>
    </location>
    <ligand>
        <name>5-amino-6-(D-ribitylamino)uracil</name>
        <dbReference type="ChEBI" id="CHEBI:15934"/>
    </ligand>
</feature>
<feature type="binding site" evidence="1">
    <location>
        <begin position="81"/>
        <end position="83"/>
    </location>
    <ligand>
        <name>5-amino-6-(D-ribitylamino)uracil</name>
        <dbReference type="ChEBI" id="CHEBI:15934"/>
    </ligand>
</feature>
<feature type="binding site" evidence="1">
    <location>
        <begin position="86"/>
        <end position="87"/>
    </location>
    <ligand>
        <name>(2S)-2-hydroxy-3-oxobutyl phosphate</name>
        <dbReference type="ChEBI" id="CHEBI:58830"/>
    </ligand>
</feature>
<feature type="binding site" evidence="1">
    <location>
        <position position="114"/>
    </location>
    <ligand>
        <name>5-amino-6-(D-ribitylamino)uracil</name>
        <dbReference type="ChEBI" id="CHEBI:15934"/>
    </ligand>
</feature>
<feature type="binding site" evidence="1">
    <location>
        <position position="128"/>
    </location>
    <ligand>
        <name>(2S)-2-hydroxy-3-oxobutyl phosphate</name>
        <dbReference type="ChEBI" id="CHEBI:58830"/>
    </ligand>
</feature>
<dbReference type="EC" id="2.5.1.78" evidence="1"/>
<dbReference type="EMBL" id="CP000436">
    <property type="protein sequence ID" value="ABI25105.1"/>
    <property type="molecule type" value="Genomic_DNA"/>
</dbReference>
<dbReference type="SMR" id="Q0I3N6"/>
<dbReference type="KEGG" id="hso:HS_0830"/>
<dbReference type="eggNOG" id="COG0054">
    <property type="taxonomic scope" value="Bacteria"/>
</dbReference>
<dbReference type="HOGENOM" id="CLU_089358_1_1_6"/>
<dbReference type="UniPathway" id="UPA00275">
    <property type="reaction ID" value="UER00404"/>
</dbReference>
<dbReference type="GO" id="GO:0005829">
    <property type="term" value="C:cytosol"/>
    <property type="evidence" value="ECO:0007669"/>
    <property type="project" value="TreeGrafter"/>
</dbReference>
<dbReference type="GO" id="GO:0009349">
    <property type="term" value="C:riboflavin synthase complex"/>
    <property type="evidence" value="ECO:0007669"/>
    <property type="project" value="InterPro"/>
</dbReference>
<dbReference type="GO" id="GO:0000906">
    <property type="term" value="F:6,7-dimethyl-8-ribityllumazine synthase activity"/>
    <property type="evidence" value="ECO:0007669"/>
    <property type="project" value="UniProtKB-UniRule"/>
</dbReference>
<dbReference type="GO" id="GO:0009231">
    <property type="term" value="P:riboflavin biosynthetic process"/>
    <property type="evidence" value="ECO:0007669"/>
    <property type="project" value="UniProtKB-UniRule"/>
</dbReference>
<dbReference type="CDD" id="cd09209">
    <property type="entry name" value="Lumazine_synthase-I"/>
    <property type="match status" value="1"/>
</dbReference>
<dbReference type="FunFam" id="3.40.50.960:FF:000001">
    <property type="entry name" value="6,7-dimethyl-8-ribityllumazine synthase"/>
    <property type="match status" value="1"/>
</dbReference>
<dbReference type="Gene3D" id="3.40.50.960">
    <property type="entry name" value="Lumazine/riboflavin synthase"/>
    <property type="match status" value="1"/>
</dbReference>
<dbReference type="HAMAP" id="MF_00178">
    <property type="entry name" value="Lumazine_synth"/>
    <property type="match status" value="1"/>
</dbReference>
<dbReference type="InterPro" id="IPR034964">
    <property type="entry name" value="LS"/>
</dbReference>
<dbReference type="InterPro" id="IPR002180">
    <property type="entry name" value="LS/RS"/>
</dbReference>
<dbReference type="InterPro" id="IPR036467">
    <property type="entry name" value="LS/RS_sf"/>
</dbReference>
<dbReference type="NCBIfam" id="TIGR00114">
    <property type="entry name" value="lumazine-synth"/>
    <property type="match status" value="1"/>
</dbReference>
<dbReference type="NCBIfam" id="NF000812">
    <property type="entry name" value="PRK00061.1-4"/>
    <property type="match status" value="1"/>
</dbReference>
<dbReference type="PANTHER" id="PTHR21058:SF0">
    <property type="entry name" value="6,7-DIMETHYL-8-RIBITYLLUMAZINE SYNTHASE"/>
    <property type="match status" value="1"/>
</dbReference>
<dbReference type="PANTHER" id="PTHR21058">
    <property type="entry name" value="6,7-DIMETHYL-8-RIBITYLLUMAZINE SYNTHASE DMRL SYNTHASE LUMAZINE SYNTHASE"/>
    <property type="match status" value="1"/>
</dbReference>
<dbReference type="Pfam" id="PF00885">
    <property type="entry name" value="DMRL_synthase"/>
    <property type="match status" value="1"/>
</dbReference>
<dbReference type="SUPFAM" id="SSF52121">
    <property type="entry name" value="Lumazine synthase"/>
    <property type="match status" value="1"/>
</dbReference>
<sequence length="157" mass="16514">MKVLEGIVTAPNAKIAVVIARFNSFINESLLEGALDALKRIGQVKDENITLVRVPGAYELPLIARRLADSKKYDAIVALGTVIRGGTAHFEYVAGEASSGLGQVAMQAEIPVAFGVLTTENIEQAIERAGTKAGNKGAEAALVALEMVNLLAQIDKA</sequence>
<keyword id="KW-0686">Riboflavin biosynthesis</keyword>
<keyword id="KW-0808">Transferase</keyword>
<organism>
    <name type="scientific">Histophilus somni (strain 129Pt)</name>
    <name type="common">Haemophilus somnus</name>
    <dbReference type="NCBI Taxonomy" id="205914"/>
    <lineage>
        <taxon>Bacteria</taxon>
        <taxon>Pseudomonadati</taxon>
        <taxon>Pseudomonadota</taxon>
        <taxon>Gammaproteobacteria</taxon>
        <taxon>Pasteurellales</taxon>
        <taxon>Pasteurellaceae</taxon>
        <taxon>Histophilus</taxon>
    </lineage>
</organism>
<accession>Q0I3N6</accession>
<proteinExistence type="inferred from homology"/>
<name>RISB_HISS1</name>
<comment type="function">
    <text evidence="1">Catalyzes the formation of 6,7-dimethyl-8-ribityllumazine by condensation of 5-amino-6-(D-ribitylamino)uracil with 3,4-dihydroxy-2-butanone 4-phosphate. This is the penultimate step in the biosynthesis of riboflavin.</text>
</comment>
<comment type="catalytic activity">
    <reaction evidence="1">
        <text>(2S)-2-hydroxy-3-oxobutyl phosphate + 5-amino-6-(D-ribitylamino)uracil = 6,7-dimethyl-8-(1-D-ribityl)lumazine + phosphate + 2 H2O + H(+)</text>
        <dbReference type="Rhea" id="RHEA:26152"/>
        <dbReference type="ChEBI" id="CHEBI:15377"/>
        <dbReference type="ChEBI" id="CHEBI:15378"/>
        <dbReference type="ChEBI" id="CHEBI:15934"/>
        <dbReference type="ChEBI" id="CHEBI:43474"/>
        <dbReference type="ChEBI" id="CHEBI:58201"/>
        <dbReference type="ChEBI" id="CHEBI:58830"/>
        <dbReference type="EC" id="2.5.1.78"/>
    </reaction>
</comment>
<comment type="pathway">
    <text evidence="1">Cofactor biosynthesis; riboflavin biosynthesis; riboflavin from 2-hydroxy-3-oxobutyl phosphate and 5-amino-6-(D-ribitylamino)uracil: step 1/2.</text>
</comment>
<comment type="subunit">
    <text evidence="1">Forms an icosahedral capsid composed of 60 subunits, arranged as a dodecamer of pentamers.</text>
</comment>
<comment type="similarity">
    <text evidence="1">Belongs to the DMRL synthase family.</text>
</comment>
<gene>
    <name evidence="1" type="primary">ribH</name>
    <name type="ordered locus">HS_0830</name>
</gene>
<evidence type="ECO:0000255" key="1">
    <source>
        <dbReference type="HAMAP-Rule" id="MF_00178"/>
    </source>
</evidence>